<dbReference type="EMBL" id="Y08851">
    <property type="protein sequence ID" value="CAA70076.1"/>
    <property type="molecule type" value="Genomic_DNA"/>
</dbReference>
<dbReference type="EMBL" id="AJ223851">
    <property type="protein sequence ID" value="CAA11582.1"/>
    <property type="molecule type" value="Genomic_RNA"/>
</dbReference>
<dbReference type="RefSeq" id="NP_056915.1">
    <property type="nucleotide sequence ID" value="NC_001871.1"/>
</dbReference>
<dbReference type="RefSeq" id="YP_009513250.1">
    <property type="nucleotide sequence ID" value="NC_039242.1"/>
</dbReference>
<dbReference type="SMR" id="O56861"/>
<dbReference type="ELM" id="O56861"/>
<dbReference type="GlyCosmos" id="O56861">
    <property type="glycosylation" value="16 sites, No reported glycans"/>
</dbReference>
<dbReference type="GeneID" id="37627275"/>
<dbReference type="OrthoDB" id="1108at10239"/>
<dbReference type="Proteomes" id="UP000008763">
    <property type="component" value="Genome"/>
</dbReference>
<dbReference type="Proteomes" id="UP000201849">
    <property type="component" value="Genome"/>
</dbReference>
<dbReference type="GO" id="GO:0044167">
    <property type="term" value="C:host cell endoplasmic reticulum membrane"/>
    <property type="evidence" value="ECO:0007669"/>
    <property type="project" value="UniProtKB-SubCell"/>
</dbReference>
<dbReference type="GO" id="GO:0016020">
    <property type="term" value="C:membrane"/>
    <property type="evidence" value="ECO:0007669"/>
    <property type="project" value="UniProtKB-KW"/>
</dbReference>
<dbReference type="GO" id="GO:0019031">
    <property type="term" value="C:viral envelope"/>
    <property type="evidence" value="ECO:0007669"/>
    <property type="project" value="UniProtKB-KW"/>
</dbReference>
<dbReference type="GO" id="GO:0055036">
    <property type="term" value="C:virion membrane"/>
    <property type="evidence" value="ECO:0007669"/>
    <property type="project" value="UniProtKB-SubCell"/>
</dbReference>
<dbReference type="InterPro" id="IPR005070">
    <property type="entry name" value="Foamy_env"/>
</dbReference>
<dbReference type="Pfam" id="PF03408">
    <property type="entry name" value="Foamy_virus_ENV"/>
    <property type="match status" value="1"/>
</dbReference>
<name>ENV_FFV</name>
<gene>
    <name type="primary">env</name>
</gene>
<organism>
    <name type="scientific">Feline foamy virus</name>
    <name type="common">FFV</name>
    <name type="synonym">Feline syncytial virus</name>
    <dbReference type="NCBI Taxonomy" id="53182"/>
    <lineage>
        <taxon>Viruses</taxon>
        <taxon>Riboviria</taxon>
        <taxon>Pararnavirae</taxon>
        <taxon>Artverviricota</taxon>
        <taxon>Revtraviricetes</taxon>
        <taxon>Ortervirales</taxon>
        <taxon>Retroviridae</taxon>
        <taxon>Spumaretrovirinae</taxon>
        <taxon>Felispumavirus</taxon>
    </lineage>
</organism>
<feature type="chain" id="PRO_0000244973" description="Envelope glycoprotein gp130" evidence="1">
    <location>
        <begin position="1"/>
        <end position="982"/>
    </location>
</feature>
<feature type="chain" id="PRO_0000244974" description="Leader peptide">
    <location>
        <begin position="1"/>
        <end position="127"/>
    </location>
</feature>
<feature type="chain" id="PRO_0000244975" description="Surface protein" evidence="1">
    <location>
        <begin position="128"/>
        <end position="563"/>
    </location>
</feature>
<feature type="chain" id="PRO_0000244976" description="Transmembrane protein" evidence="1">
    <location>
        <begin position="564"/>
        <end position="982"/>
    </location>
</feature>
<feature type="topological domain" description="Cytoplasmic" evidence="2">
    <location>
        <begin position="1"/>
        <end position="63"/>
    </location>
</feature>
<feature type="transmembrane region" description="Helical; Signal-anchor for type III membrane protein" evidence="2">
    <location>
        <begin position="64"/>
        <end position="86"/>
    </location>
</feature>
<feature type="topological domain" description="Lumenal" evidence="2">
    <location>
        <begin position="87"/>
        <end position="953"/>
    </location>
</feature>
<feature type="transmembrane region" description="Helical" evidence="2">
    <location>
        <begin position="954"/>
        <end position="974"/>
    </location>
</feature>
<feature type="topological domain" description="Cytoplasmic" evidence="2">
    <location>
        <begin position="975"/>
        <end position="982"/>
    </location>
</feature>
<feature type="region of interest" description="Disordered" evidence="3">
    <location>
        <begin position="548"/>
        <end position="567"/>
    </location>
</feature>
<feature type="region of interest" description="Fusion peptide" evidence="1">
    <location>
        <begin position="569"/>
        <end position="591"/>
    </location>
</feature>
<feature type="short sequence motif" description="Endoplasmic reticulum retention signal" evidence="1">
    <location>
        <begin position="978"/>
        <end position="980"/>
    </location>
</feature>
<feature type="site" description="Required for Gag-Env interaction">
    <location>
        <position position="12"/>
    </location>
</feature>
<feature type="site" description="Required for Gag-Env interaction">
    <location>
        <position position="15"/>
    </location>
</feature>
<feature type="site" description="Cleavage; by host">
    <location>
        <begin position="127"/>
        <end position="128"/>
    </location>
</feature>
<feature type="site" description="Cleavage; by host" evidence="1">
    <location>
        <begin position="563"/>
        <end position="564"/>
    </location>
</feature>
<feature type="glycosylation site" description="N-linked (GlcNAc...) asparagine; by host" evidence="7">
    <location>
        <position position="118"/>
    </location>
</feature>
<feature type="glycosylation site" description="N-linked (GlcNAc...) asparagine; by host" evidence="7">
    <location>
        <position position="139"/>
    </location>
</feature>
<feature type="glycosylation site" description="N-linked (GlcNAc...) asparagine; by host" evidence="2">
    <location>
        <position position="266"/>
    </location>
</feature>
<feature type="glycosylation site" description="N-linked (GlcNAc...) asparagine; by host" evidence="2">
    <location>
        <position position="283"/>
    </location>
</feature>
<feature type="glycosylation site" description="N-linked (GlcNAc...) asparagine; by host" evidence="2">
    <location>
        <position position="307"/>
    </location>
</feature>
<feature type="glycosylation site" description="N-linked (GlcNAc...) asparagine; by host" evidence="2">
    <location>
        <position position="390"/>
    </location>
</feature>
<feature type="glycosylation site" description="N-linked (GlcNAc...) asparagine; by host" evidence="2">
    <location>
        <position position="409"/>
    </location>
</feature>
<feature type="glycosylation site" description="N-linked (GlcNAc...) asparagine; by host" evidence="2">
    <location>
        <position position="420"/>
    </location>
</feature>
<feature type="glycosylation site" description="N-linked (GlcNAc...) asparagine; by host" evidence="2">
    <location>
        <position position="489"/>
    </location>
</feature>
<feature type="glycosylation site" description="N-linked (GlcNAc...) asparagine; by host" evidence="2">
    <location>
        <position position="521"/>
    </location>
</feature>
<feature type="glycosylation site" description="N-linked (GlcNAc...) asparagine; by host" evidence="2">
    <location>
        <position position="536"/>
    </location>
</feature>
<feature type="glycosylation site" description="N-linked (GlcNAc...) asparagine; by host" evidence="2">
    <location>
        <position position="654"/>
    </location>
</feature>
<feature type="glycosylation site" description="N-linked (GlcNAc...) asparagine; by host" evidence="2">
    <location>
        <position position="690"/>
    </location>
</feature>
<feature type="glycosylation site" description="N-linked (GlcNAc...) asparagine; by host" evidence="2">
    <location>
        <position position="775"/>
    </location>
</feature>
<feature type="glycosylation site" description="N-linked (GlcNAc...) asparagine; by host" evidence="2">
    <location>
        <position position="800"/>
    </location>
</feature>
<feature type="glycosylation site" description="N-linked (GlcNAc...) asparagine; by host" evidence="2">
    <location>
        <position position="825"/>
    </location>
</feature>
<accession>O56861</accession>
<evidence type="ECO:0000250" key="1"/>
<evidence type="ECO:0000255" key="2"/>
<evidence type="ECO:0000256" key="3">
    <source>
        <dbReference type="SAM" id="MobiDB-lite"/>
    </source>
</evidence>
<evidence type="ECO:0000269" key="4">
    <source>
    </source>
</evidence>
<evidence type="ECO:0000269" key="5">
    <source>
    </source>
</evidence>
<evidence type="ECO:0000269" key="6">
    <source>
    </source>
</evidence>
<evidence type="ECO:0000305" key="7"/>
<keyword id="KW-0165">Cleavage on pair of basic residues</keyword>
<keyword id="KW-0325">Glycoprotein</keyword>
<keyword id="KW-1038">Host endoplasmic reticulum</keyword>
<keyword id="KW-1043">Host membrane</keyword>
<keyword id="KW-0472">Membrane</keyword>
<keyword id="KW-1185">Reference proteome</keyword>
<keyword id="KW-0735">Signal-anchor</keyword>
<keyword id="KW-0812">Transmembrane</keyword>
<keyword id="KW-1133">Transmembrane helix</keyword>
<keyword id="KW-0261">Viral envelope protein</keyword>
<keyword id="KW-0946">Virion</keyword>
<reference key="1">
    <citation type="journal article" date="1997" name="J. Virol.">
        <title>Characterization of the genome of feline foamy virus and its proteins shows distinct features different from those of primate Spumaviruses.</title>
        <authorList>
            <person name="Winkler I."/>
            <person name="Bodem J."/>
            <person name="Haas L."/>
            <person name="Zemba M."/>
            <person name="Delius H."/>
            <person name="Flower R."/>
            <person name="Fluegel R.M."/>
            <person name="Loechelt M."/>
        </authorList>
    </citation>
    <scope>NUCLEOTIDE SEQUENCE [GENOMIC DNA]</scope>
</reference>
<reference key="2">
    <citation type="journal article" date="1998" name="Virology">
        <title>Detection of subgenomic cDNAs and mapping of feline foamy virus mRNAs reveals complex patterns of transcription.</title>
        <authorList>
            <person name="Bodem J."/>
            <person name="Loechelt M."/>
            <person name="Delius H."/>
            <person name="Fluegel R.M."/>
        </authorList>
    </citation>
    <scope>NUCLEOTIDE SEQUENCE [GENOMIC RNA]</scope>
    <source>
        <strain>Isolate FUV</strain>
    </source>
</reference>
<reference key="3">
    <citation type="journal article" date="2001" name="J. Virol.">
        <title>Specific interaction of a novel foamy virus Env leader protein with the N-terminal Gag domain.</title>
        <authorList>
            <person name="Wilk T."/>
            <person name="Geiselhart V."/>
            <person name="Frech M."/>
            <person name="Fuller S.D."/>
            <person name="Fluegel R.M."/>
            <person name="Loechelt M."/>
        </authorList>
    </citation>
    <scope>INTERACTION OF ENV LEADER PEPTIDE WITH GAG PROTEIN N-TERMINUS</scope>
    <source>
        <strain>Isolate FUV</strain>
    </source>
</reference>
<reference key="4">
    <citation type="journal article" date="2003" name="Virology">
        <title>Features of the Env leader protein and the N-terminal Gag domain of feline foamy virus important for virus morphogenesis.</title>
        <authorList>
            <person name="Geiselhart V."/>
            <person name="Schwantes A."/>
            <person name="Bastone P."/>
            <person name="Frech M."/>
            <person name="Loechelt M."/>
        </authorList>
    </citation>
    <scope>SUBCELLULAR LOCATION OF ENV LEADER PEPTIDE</scope>
    <scope>INTERACTION OF ENV LEADER PEPTIDE WITH GAG PROTEIN N-TERMINUS</scope>
</reference>
<reference key="5">
    <citation type="journal article" date="2004" name="J. Virol.">
        <title>Furin-mediated cleavage of the feline foamy virus Env leader protein.</title>
        <authorList>
            <person name="Geiselhart V."/>
            <person name="Bastone P."/>
            <person name="Kempf T."/>
            <person name="Schnoelzer M."/>
            <person name="Loechelt M."/>
        </authorList>
    </citation>
    <scope>TOPOLOGY OF ENVELOPE GLYCOPROTEIN GP130</scope>
    <scope>CLEAVAGE OF LEADER PEPTIDE BY A HOST FURIN-LIKE PROTEASE</scope>
    <scope>LOW EFFICIENCY OF SIGNAL CLEAVAGE BY SIGNAL PEPTIDASE</scope>
</reference>
<comment type="function">
    <text evidence="1">The surface protein (SU) attaches the virus to the host cell by binding to the cell receptor. This interaction triggers the refolding of transmembrane protein (TM) and is thought to activate its fusogenic potential by unmasking its fusion peptide (By similarity).</text>
</comment>
<comment type="function">
    <text evidence="1">The transmembrane protein (TM) acts as a class I viral fusion protein. Under the current model, the protein has at least 3 conformational states: pre-fusion native state, pre-hairpin intermediate state, and post-fusion hairpin state. During viral and target cell membrane fusion, the coiled coil regions (heptad repeats) assume a trimer-of-hairpins structure, positioning the fusion peptide in close proximity to the C-terminal region of the ectodomain. The formation of this structure appears to drive apposition and subsequent fusion of viral and target cell membranes. Membranes fusion leads to delivery of the nucleocapsid into the cytoplasm (By similarity).</text>
</comment>
<comment type="function">
    <text>The leader peptide is a component of released, infectious virions and is required for particle budding.</text>
</comment>
<comment type="subunit">
    <text evidence="1 4 5">The mature envelope protein consists of a trimer of SU-TM heterodimers (By similarity). The N-terminus of leader peptide specifically interacts with Gag protein. This specific interaction between Gag protein and Env glycoprotein may allow particle egress.</text>
</comment>
<comment type="subcellular location">
    <molecule>Envelope glycoprotein gp130</molecule>
    <subcellularLocation>
        <location>Host endoplasmic reticulum membrane</location>
    </subcellularLocation>
    <text>The polyprotein has a highly unusual biosynthesis for a retroviral glycoprotein. It is translated as a full-length precursor protein into the rough endoplasmic reticulum and initially has a type III protein configuration with both its N and C-termini located intracytoplasmically.</text>
</comment>
<comment type="subcellular location">
    <molecule>Leader peptide</molecule>
    <subcellularLocation>
        <location evidence="7">Virion membrane</location>
        <topology evidence="7">Single-pass type II membrane protein</topology>
    </subcellularLocation>
    <subcellularLocation>
        <location evidence="7">Host endoplasmic reticulum membrane</location>
        <topology evidence="7">Single-pass type II membrane protein</topology>
    </subcellularLocation>
    <text evidence="1">Its N-terminus is located inside the viral particle.</text>
</comment>
<comment type="subcellular location">
    <molecule>Transmembrane protein</molecule>
    <subcellularLocation>
        <location evidence="7">Virion membrane</location>
        <topology evidence="7">Single-pass type I membrane protein</topology>
    </subcellularLocation>
    <subcellularLocation>
        <location evidence="7">Host endoplasmic reticulum membrane</location>
        <topology evidence="7">Single-pass type I membrane protein</topology>
    </subcellularLocation>
</comment>
<comment type="subcellular location">
    <molecule>Surface protein</molecule>
    <subcellularLocation>
        <location evidence="1">Virion membrane</location>
        <topology evidence="1">Peripheral membrane protein</topology>
    </subcellularLocation>
    <subcellularLocation>
        <location evidence="1">Host endoplasmic reticulum membrane</location>
        <topology evidence="1">Peripheral membrane protein</topology>
    </subcellularLocation>
    <text evidence="1">The surface protein is not anchored to the viral envelope, but associates with the extravirion surface through its binding to TM.</text>
</comment>
<comment type="domain">
    <text evidence="1">The ER retention signal plays an important role in establishing the intracellular site of budding.</text>
</comment>
<comment type="PTM">
    <text evidence="6">Envelope glycoproteins are synthesized as an inactive precursor that is processed by host furin or a furin-like protease to yield a functional hetero-oligomeric complex. A 9 kDa protein corresponding to the N-terminus of the leader peptide may arise through low efficient cleavage by host signal peptidase.</text>
</comment>
<comment type="PTM">
    <text evidence="1">The transmembrane protein and the surface protein are N-glycosylated.</text>
</comment>
<comment type="miscellaneous">
    <text>Foamy viruses are distinct from other retroviruses in many respects. Their protease is active as an uncleaved Pro-Pol protein. Mature particles do not include the usual processed retroviral structural protein (MA, CA and NC), but instead contain two large Gag proteins. Their functional nucleic acid appears to be either RNA or dsDNA (up to 20% of extracellular particles), because they probably proceed either to an early (before integration) or late reverse transcription (after assembly). Foamy viruses have the ability to retrotranspose intracellularly with high efficiency. They bud predominantly into the endoplasmic reticulum (ER) and occasionally at the plasma membrane. Budding requires the presence of Env proteins. Most viral particles probably remain within the infected cell.</text>
</comment>
<organismHost>
    <name type="scientific">Felis catus</name>
    <name type="common">Cat</name>
    <name type="synonym">Felis silvestris catus</name>
    <dbReference type="NCBI Taxonomy" id="9685"/>
</organismHost>
<protein>
    <recommendedName>
        <fullName>Envelope glycoprotein gp130</fullName>
    </recommendedName>
    <alternativeName>
        <fullName>Env polyprotein</fullName>
    </alternativeName>
    <component>
        <recommendedName>
            <fullName>Leader peptide</fullName>
            <shortName>LP</shortName>
        </recommendedName>
        <alternativeName>
            <fullName>Env leader protein</fullName>
            <shortName>Elp</shortName>
        </alternativeName>
        <alternativeName>
            <fullName>gp18LP</fullName>
        </alternativeName>
    </component>
    <component>
        <recommendedName>
            <fullName>Surface protein</fullName>
            <shortName>SU</shortName>
        </recommendedName>
        <alternativeName>
            <fullName>Glycoprotein 80</fullName>
            <shortName>gp80</shortName>
        </alternativeName>
    </component>
    <component>
        <recommendedName>
            <fullName>Transmembrane protein</fullName>
            <shortName>TM</shortName>
        </recommendedName>
        <alternativeName>
            <fullName>Glycoprotein 48</fullName>
            <shortName>gp48</shortName>
        </alternativeName>
    </component>
</protein>
<proteinExistence type="evidence at protein level"/>
<sequence>MEQEHVMTLKEWMEWNAHKQLQKLQSTHPELHVDIPEDIPLVPEKVPLKMRMRYRCYTLCATSTRIMFWILFFLLCFSIVTLSTIISILRYQWKEAITHPGPVLSWQVTNSHVTMGGNTSSSSRRRRDIQYHKLPVEVNISGIPQGLFFAPQPKPIFHKERTLGLSQVILIDSDTITQGHIKQQKAYLVSTINEEMEQLQKTVLPFDLPIKDPLTQKEYIEKRCFQKYGHCYVIAFNGNKVWPSQDLIQDQCPLPPRFGNNLKYRNHTIWKYYIPLPFKVSSNWTRVESYGNIRIGSFKVPDEFRQNATHGIFCSDALYSNWYPRDLPSSVQQSFAQAYITKVLMKRKKQPTLRDIAFPKELSPVGSGMLFRPINPYDICNMPRAVLLLNKTYYTFSLWEGDCGYYQHNLTLHPACKNFNRTRQDHPYACRFWRNKYDSESVQCYNNDMCYYRPLYDGTENTEDWGWLAYTDSFPSPICIEEKRIWKKNYTLSSVLAECVNQAMEYGIDEVLSKLDLIFGNLTHQSADEAFIPVNNFTWPRYEKQNKQQKTSCERKKGRRQRRSVSTENLRRIQEAGLGLANAITTVAKISDLNDQKLAKGVHLLRDHVVTLMEANLDDIVSLGEGIQIEHIHNHLTSLKLLTLENRIDWRFINDSWIQEELGVSDNIMKVIRKTARCIPYNVKQTRNLNTSTAWEIYLYYEIIIPTTIYTQNWNIKNLGHLVRNAGYLSKVWIQQPFEVLNQECGTNIYLHMEECVDQDYIICEEVMELPPCGNGTGSDCPVLTKPLTDEYLEIEPLKNGSYLVLSSTTDCGIPAYVPVVITVNDTISCFDKEFKRPLKQELKVTKYAPSVPQLELRVPRLTSLIAKIKGIQIEITSSWETIKEQVARAKAELLRLDLHEGDYPEWLQLLGEATKDVWPTISNFVSGIGNFIKDTAGGIFGTAFSFLGYVKPVLLGFVIIFCIILIIKIIGWLQNTRKKDQ</sequence>